<comment type="catalytic activity">
    <reaction evidence="1">
        <text>alpha-D-xylose = alpha-D-xylulofuranose</text>
        <dbReference type="Rhea" id="RHEA:22816"/>
        <dbReference type="ChEBI" id="CHEBI:28518"/>
        <dbReference type="ChEBI" id="CHEBI:188998"/>
        <dbReference type="EC" id="5.3.1.5"/>
    </reaction>
</comment>
<comment type="cofactor">
    <cofactor evidence="1">
        <name>Mg(2+)</name>
        <dbReference type="ChEBI" id="CHEBI:18420"/>
    </cofactor>
    <text evidence="1">Binds 2 magnesium ions per subunit.</text>
</comment>
<comment type="subunit">
    <text evidence="1">Homotetramer.</text>
</comment>
<comment type="subcellular location">
    <subcellularLocation>
        <location evidence="1">Cytoplasm</location>
    </subcellularLocation>
</comment>
<comment type="similarity">
    <text evidence="1">Belongs to the xylose isomerase family.</text>
</comment>
<accession>Q9S3Z4</accession>
<organism>
    <name type="scientific">Streptomyces corchorusii</name>
    <name type="common">Streptomyces chibaensis</name>
    <dbReference type="NCBI Taxonomy" id="1903"/>
    <lineage>
        <taxon>Bacteria</taxon>
        <taxon>Bacillati</taxon>
        <taxon>Actinomycetota</taxon>
        <taxon>Actinomycetes</taxon>
        <taxon>Kitasatosporales</taxon>
        <taxon>Streptomycetaceae</taxon>
        <taxon>Streptomyces</taxon>
    </lineage>
</organism>
<name>XYLA_STRCK</name>
<reference key="1">
    <citation type="submission" date="1999-07" db="EMBL/GenBank/DDBJ databases">
        <title>Streptomyces chibaensis J-59 xylA.</title>
        <authorList>
            <person name="Joo G.J."/>
            <person name="Shin J.H."/>
            <person name="Heo G.Y."/>
            <person name="Park H.D."/>
            <person name="Rhee I.K."/>
        </authorList>
    </citation>
    <scope>NUCLEOTIDE SEQUENCE [GENOMIC DNA]</scope>
    <source>
        <strain>J-59</strain>
    </source>
</reference>
<dbReference type="EC" id="5.3.1.5" evidence="1"/>
<dbReference type="EMBL" id="AF170068">
    <property type="protein sequence ID" value="AAD48850.1"/>
    <property type="molecule type" value="Genomic_DNA"/>
</dbReference>
<dbReference type="SMR" id="Q9S3Z4"/>
<dbReference type="GO" id="GO:0005737">
    <property type="term" value="C:cytoplasm"/>
    <property type="evidence" value="ECO:0007669"/>
    <property type="project" value="UniProtKB-SubCell"/>
</dbReference>
<dbReference type="GO" id="GO:0000287">
    <property type="term" value="F:magnesium ion binding"/>
    <property type="evidence" value="ECO:0007669"/>
    <property type="project" value="UniProtKB-UniRule"/>
</dbReference>
<dbReference type="GO" id="GO:0009045">
    <property type="term" value="F:xylose isomerase activity"/>
    <property type="evidence" value="ECO:0007669"/>
    <property type="project" value="UniProtKB-UniRule"/>
</dbReference>
<dbReference type="GO" id="GO:0042732">
    <property type="term" value="P:D-xylose metabolic process"/>
    <property type="evidence" value="ECO:0007669"/>
    <property type="project" value="UniProtKB-UniRule"/>
</dbReference>
<dbReference type="FunFam" id="3.20.20.150:FF:000009">
    <property type="entry name" value="Xylose isomerase"/>
    <property type="match status" value="1"/>
</dbReference>
<dbReference type="Gene3D" id="3.20.20.150">
    <property type="entry name" value="Divalent-metal-dependent TIM barrel enzymes"/>
    <property type="match status" value="1"/>
</dbReference>
<dbReference type="HAMAP" id="MF_00455">
    <property type="entry name" value="Xylose_isom_A"/>
    <property type="match status" value="1"/>
</dbReference>
<dbReference type="InterPro" id="IPR036237">
    <property type="entry name" value="Xyl_isomerase-like_sf"/>
</dbReference>
<dbReference type="InterPro" id="IPR013022">
    <property type="entry name" value="Xyl_isomerase-like_TIM-brl"/>
</dbReference>
<dbReference type="InterPro" id="IPR013453">
    <property type="entry name" value="XylA_actinobac"/>
</dbReference>
<dbReference type="InterPro" id="IPR001998">
    <property type="entry name" value="Xylose_isomerase"/>
</dbReference>
<dbReference type="NCBIfam" id="TIGR02631">
    <property type="entry name" value="xylA_Arthro"/>
    <property type="match status" value="1"/>
</dbReference>
<dbReference type="PANTHER" id="PTHR48408">
    <property type="match status" value="1"/>
</dbReference>
<dbReference type="PANTHER" id="PTHR48408:SF1">
    <property type="entry name" value="XYLOSE ISOMERASE"/>
    <property type="match status" value="1"/>
</dbReference>
<dbReference type="Pfam" id="PF01261">
    <property type="entry name" value="AP_endonuc_2"/>
    <property type="match status" value="1"/>
</dbReference>
<dbReference type="PRINTS" id="PR00688">
    <property type="entry name" value="XYLOSISMRASE"/>
</dbReference>
<dbReference type="SUPFAM" id="SSF51658">
    <property type="entry name" value="Xylose isomerase-like"/>
    <property type="match status" value="1"/>
</dbReference>
<dbReference type="PROSITE" id="PS51415">
    <property type="entry name" value="XYLOSE_ISOMERASE"/>
    <property type="match status" value="1"/>
</dbReference>
<gene>
    <name evidence="1" type="primary">xylA</name>
</gene>
<evidence type="ECO:0000255" key="1">
    <source>
        <dbReference type="HAMAP-Rule" id="MF_00455"/>
    </source>
</evidence>
<proteinExistence type="inferred from homology"/>
<protein>
    <recommendedName>
        <fullName evidence="1">Xylose isomerase</fullName>
        <ecNumber evidence="1">5.3.1.5</ecNumber>
    </recommendedName>
</protein>
<sequence>MSYQPTPEDRFTFGLWTVGWQGRDPFGDATRRALDPVETVQRLAELGAHGVTFHDDDLIPFGSSDTERESHIKRFRQALDATGMTVPMATTNLFTHPVFKDGAFTANDRDVRRYALRKTIRNIDLAAELGAKTYVAWGGREGAESGAAKDVRSALDRMKEAFDLLGEYVTSQGYDLRFAIEPKPNEPRGDILLPTVGHALAFIERLERPELYGVNPEVGHEQMAGLNFPHGIAQALWAGKLFHIDLNGQSGIKYDQDLRFGAGDLRSAFWLVDLLESAGYEGPRHFDFKPPRTEDLDGVWASAAGCMRNYLILKERAAAFRADPEVQAALRASRLDQLAQPTAADGLEDLLADRAAFEDFDVEAAAARGMAFERLDQLAMDHLLGARG</sequence>
<keyword id="KW-0119">Carbohydrate metabolism</keyword>
<keyword id="KW-0963">Cytoplasm</keyword>
<keyword id="KW-0413">Isomerase</keyword>
<keyword id="KW-0460">Magnesium</keyword>
<keyword id="KW-0479">Metal-binding</keyword>
<keyword id="KW-0859">Xylose metabolism</keyword>
<feature type="chain" id="PRO_0000195797" description="Xylose isomerase">
    <location>
        <begin position="1"/>
        <end position="388"/>
    </location>
</feature>
<feature type="active site" evidence="1">
    <location>
        <position position="54"/>
    </location>
</feature>
<feature type="active site" evidence="1">
    <location>
        <position position="57"/>
    </location>
</feature>
<feature type="binding site" evidence="1">
    <location>
        <position position="181"/>
    </location>
    <ligand>
        <name>Mg(2+)</name>
        <dbReference type="ChEBI" id="CHEBI:18420"/>
        <label>1</label>
    </ligand>
</feature>
<feature type="binding site" evidence="1">
    <location>
        <position position="217"/>
    </location>
    <ligand>
        <name>Mg(2+)</name>
        <dbReference type="ChEBI" id="CHEBI:18420"/>
        <label>1</label>
    </ligand>
</feature>
<feature type="binding site" evidence="1">
    <location>
        <position position="217"/>
    </location>
    <ligand>
        <name>Mg(2+)</name>
        <dbReference type="ChEBI" id="CHEBI:18420"/>
        <label>2</label>
    </ligand>
</feature>
<feature type="binding site" evidence="1">
    <location>
        <position position="220"/>
    </location>
    <ligand>
        <name>Mg(2+)</name>
        <dbReference type="ChEBI" id="CHEBI:18420"/>
        <label>2</label>
    </ligand>
</feature>
<feature type="binding site" evidence="1">
    <location>
        <position position="245"/>
    </location>
    <ligand>
        <name>Mg(2+)</name>
        <dbReference type="ChEBI" id="CHEBI:18420"/>
        <label>1</label>
    </ligand>
</feature>
<feature type="binding site" evidence="1">
    <location>
        <position position="255"/>
    </location>
    <ligand>
        <name>Mg(2+)</name>
        <dbReference type="ChEBI" id="CHEBI:18420"/>
        <label>2</label>
    </ligand>
</feature>
<feature type="binding site" evidence="1">
    <location>
        <position position="257"/>
    </location>
    <ligand>
        <name>Mg(2+)</name>
        <dbReference type="ChEBI" id="CHEBI:18420"/>
        <label>2</label>
    </ligand>
</feature>
<feature type="binding site" evidence="1">
    <location>
        <position position="287"/>
    </location>
    <ligand>
        <name>Mg(2+)</name>
        <dbReference type="ChEBI" id="CHEBI:18420"/>
        <label>1</label>
    </ligand>
</feature>